<organism>
    <name type="scientific">Cupriavidus taiwanensis (strain DSM 17343 / BCRC 17206 / CCUG 44338 / CIP 107171 / LMG 19424 / R1)</name>
    <name type="common">Ralstonia taiwanensis (strain LMG 19424)</name>
    <dbReference type="NCBI Taxonomy" id="977880"/>
    <lineage>
        <taxon>Bacteria</taxon>
        <taxon>Pseudomonadati</taxon>
        <taxon>Pseudomonadota</taxon>
        <taxon>Betaproteobacteria</taxon>
        <taxon>Burkholderiales</taxon>
        <taxon>Burkholderiaceae</taxon>
        <taxon>Cupriavidus</taxon>
    </lineage>
</organism>
<gene>
    <name evidence="1" type="primary">queC</name>
    <name type="ordered locus">RALTA_A2314</name>
</gene>
<sequence length="227" mass="24015">MTQRAIVLLSGGLDSATVLAMARAQGFETYALSMRYGQRHSSELEAAKRVAAALGAVRHEIVDLDLRRFGGSALTDDALEVPTDGASGGIPVTYVPARNTIMLSLALGWAEAVGGRDLFFGANAVDYSGYPDCRPEYVAAYETLANLATKAGVEGDRFRVHAPIIDMTKGEIIRAGIALGVDYSLTVSCYQADDDGRACGVCDSCRIRRAGFEAAGVPDPTRYQAAA</sequence>
<protein>
    <recommendedName>
        <fullName evidence="1">7-cyano-7-deazaguanine synthase</fullName>
        <ecNumber evidence="1">6.3.4.20</ecNumber>
    </recommendedName>
    <alternativeName>
        <fullName evidence="1">7-cyano-7-carbaguanine synthase</fullName>
    </alternativeName>
    <alternativeName>
        <fullName evidence="1">PreQ(0) synthase</fullName>
    </alternativeName>
    <alternativeName>
        <fullName evidence="1">Queuosine biosynthesis protein QueC</fullName>
    </alternativeName>
</protein>
<proteinExistence type="inferred from homology"/>
<name>QUEC_CUPTR</name>
<comment type="function">
    <text evidence="1">Catalyzes the ATP-dependent conversion of 7-carboxy-7-deazaguanine (CDG) to 7-cyano-7-deazaguanine (preQ(0)).</text>
</comment>
<comment type="catalytic activity">
    <reaction evidence="1">
        <text>7-carboxy-7-deazaguanine + NH4(+) + ATP = 7-cyano-7-deazaguanine + ADP + phosphate + H2O + H(+)</text>
        <dbReference type="Rhea" id="RHEA:27982"/>
        <dbReference type="ChEBI" id="CHEBI:15377"/>
        <dbReference type="ChEBI" id="CHEBI:15378"/>
        <dbReference type="ChEBI" id="CHEBI:28938"/>
        <dbReference type="ChEBI" id="CHEBI:30616"/>
        <dbReference type="ChEBI" id="CHEBI:43474"/>
        <dbReference type="ChEBI" id="CHEBI:45075"/>
        <dbReference type="ChEBI" id="CHEBI:61036"/>
        <dbReference type="ChEBI" id="CHEBI:456216"/>
        <dbReference type="EC" id="6.3.4.20"/>
    </reaction>
</comment>
<comment type="cofactor">
    <cofactor evidence="1">
        <name>Zn(2+)</name>
        <dbReference type="ChEBI" id="CHEBI:29105"/>
    </cofactor>
    <text evidence="1">Binds 1 zinc ion per subunit.</text>
</comment>
<comment type="pathway">
    <text evidence="1">Purine metabolism; 7-cyano-7-deazaguanine biosynthesis.</text>
</comment>
<comment type="similarity">
    <text evidence="1">Belongs to the QueC family.</text>
</comment>
<accession>B3R5T4</accession>
<evidence type="ECO:0000255" key="1">
    <source>
        <dbReference type="HAMAP-Rule" id="MF_01633"/>
    </source>
</evidence>
<feature type="chain" id="PRO_1000186580" description="7-cyano-7-deazaguanine synthase">
    <location>
        <begin position="1"/>
        <end position="227"/>
    </location>
</feature>
<feature type="binding site" evidence="1">
    <location>
        <begin position="9"/>
        <end position="19"/>
    </location>
    <ligand>
        <name>ATP</name>
        <dbReference type="ChEBI" id="CHEBI:30616"/>
    </ligand>
</feature>
<feature type="binding site" evidence="1">
    <location>
        <position position="189"/>
    </location>
    <ligand>
        <name>Zn(2+)</name>
        <dbReference type="ChEBI" id="CHEBI:29105"/>
    </ligand>
</feature>
<feature type="binding site" evidence="1">
    <location>
        <position position="199"/>
    </location>
    <ligand>
        <name>Zn(2+)</name>
        <dbReference type="ChEBI" id="CHEBI:29105"/>
    </ligand>
</feature>
<feature type="binding site" evidence="1">
    <location>
        <position position="202"/>
    </location>
    <ligand>
        <name>Zn(2+)</name>
        <dbReference type="ChEBI" id="CHEBI:29105"/>
    </ligand>
</feature>
<feature type="binding site" evidence="1">
    <location>
        <position position="205"/>
    </location>
    <ligand>
        <name>Zn(2+)</name>
        <dbReference type="ChEBI" id="CHEBI:29105"/>
    </ligand>
</feature>
<dbReference type="EC" id="6.3.4.20" evidence="1"/>
<dbReference type="EMBL" id="CU633749">
    <property type="protein sequence ID" value="CAQ70248.1"/>
    <property type="molecule type" value="Genomic_DNA"/>
</dbReference>
<dbReference type="RefSeq" id="WP_012353550.1">
    <property type="nucleotide sequence ID" value="NC_010528.1"/>
</dbReference>
<dbReference type="SMR" id="B3R5T4"/>
<dbReference type="GeneID" id="29761518"/>
<dbReference type="KEGG" id="cti:RALTA_A2314"/>
<dbReference type="eggNOG" id="COG0603">
    <property type="taxonomic scope" value="Bacteria"/>
</dbReference>
<dbReference type="HOGENOM" id="CLU_081854_1_1_4"/>
<dbReference type="BioCyc" id="CTAI977880:RALTA_RS11235-MONOMER"/>
<dbReference type="UniPathway" id="UPA00391"/>
<dbReference type="Proteomes" id="UP000001692">
    <property type="component" value="Chromosome 1"/>
</dbReference>
<dbReference type="GO" id="GO:0005524">
    <property type="term" value="F:ATP binding"/>
    <property type="evidence" value="ECO:0007669"/>
    <property type="project" value="UniProtKB-UniRule"/>
</dbReference>
<dbReference type="GO" id="GO:0016879">
    <property type="term" value="F:ligase activity, forming carbon-nitrogen bonds"/>
    <property type="evidence" value="ECO:0007669"/>
    <property type="project" value="UniProtKB-UniRule"/>
</dbReference>
<dbReference type="GO" id="GO:0008270">
    <property type="term" value="F:zinc ion binding"/>
    <property type="evidence" value="ECO:0007669"/>
    <property type="project" value="UniProtKB-UniRule"/>
</dbReference>
<dbReference type="GO" id="GO:0008616">
    <property type="term" value="P:queuosine biosynthetic process"/>
    <property type="evidence" value="ECO:0007669"/>
    <property type="project" value="UniProtKB-UniRule"/>
</dbReference>
<dbReference type="CDD" id="cd01995">
    <property type="entry name" value="QueC-like"/>
    <property type="match status" value="1"/>
</dbReference>
<dbReference type="FunFam" id="3.40.50.620:FF:000131">
    <property type="entry name" value="7-cyano-7-deazaguanine synthase"/>
    <property type="match status" value="1"/>
</dbReference>
<dbReference type="Gene3D" id="3.40.50.620">
    <property type="entry name" value="HUPs"/>
    <property type="match status" value="1"/>
</dbReference>
<dbReference type="HAMAP" id="MF_01633">
    <property type="entry name" value="QueC"/>
    <property type="match status" value="1"/>
</dbReference>
<dbReference type="InterPro" id="IPR018317">
    <property type="entry name" value="QueC"/>
</dbReference>
<dbReference type="InterPro" id="IPR014729">
    <property type="entry name" value="Rossmann-like_a/b/a_fold"/>
</dbReference>
<dbReference type="NCBIfam" id="TIGR00364">
    <property type="entry name" value="7-cyano-7-deazaguanine synthase QueC"/>
    <property type="match status" value="1"/>
</dbReference>
<dbReference type="PANTHER" id="PTHR42914">
    <property type="entry name" value="7-CYANO-7-DEAZAGUANINE SYNTHASE"/>
    <property type="match status" value="1"/>
</dbReference>
<dbReference type="PANTHER" id="PTHR42914:SF1">
    <property type="entry name" value="7-CYANO-7-DEAZAGUANINE SYNTHASE"/>
    <property type="match status" value="1"/>
</dbReference>
<dbReference type="Pfam" id="PF06508">
    <property type="entry name" value="QueC"/>
    <property type="match status" value="1"/>
</dbReference>
<dbReference type="PIRSF" id="PIRSF006293">
    <property type="entry name" value="ExsB"/>
    <property type="match status" value="1"/>
</dbReference>
<dbReference type="SUPFAM" id="SSF52402">
    <property type="entry name" value="Adenine nucleotide alpha hydrolases-like"/>
    <property type="match status" value="1"/>
</dbReference>
<keyword id="KW-0067">ATP-binding</keyword>
<keyword id="KW-0436">Ligase</keyword>
<keyword id="KW-0479">Metal-binding</keyword>
<keyword id="KW-0547">Nucleotide-binding</keyword>
<keyword id="KW-0671">Queuosine biosynthesis</keyword>
<keyword id="KW-0862">Zinc</keyword>
<reference key="1">
    <citation type="journal article" date="2008" name="Genome Res.">
        <title>Genome sequence of the beta-rhizobium Cupriavidus taiwanensis and comparative genomics of rhizobia.</title>
        <authorList>
            <person name="Amadou C."/>
            <person name="Pascal G."/>
            <person name="Mangenot S."/>
            <person name="Glew M."/>
            <person name="Bontemps C."/>
            <person name="Capela D."/>
            <person name="Carrere S."/>
            <person name="Cruveiller S."/>
            <person name="Dossat C."/>
            <person name="Lajus A."/>
            <person name="Marchetti M."/>
            <person name="Poinsot V."/>
            <person name="Rouy Z."/>
            <person name="Servin B."/>
            <person name="Saad M."/>
            <person name="Schenowitz C."/>
            <person name="Barbe V."/>
            <person name="Batut J."/>
            <person name="Medigue C."/>
            <person name="Masson-Boivin C."/>
        </authorList>
    </citation>
    <scope>NUCLEOTIDE SEQUENCE [LARGE SCALE GENOMIC DNA]</scope>
    <source>
        <strain>DSM 17343 / BCRC 17206 / CCUG 44338 / CIP 107171 / LMG 19424 / R1</strain>
    </source>
</reference>